<sequence length="234" mass="26142">MGGCVGTHHDSSGSLNENSDGTGVALGRNQPLKKDKPKWKSDYPMTDGQLRSKRDEFWDTAPAFEGRKEIWDALKAAAHAFESNDHELAQAIIDGASITLPHGALTECYDELGNRYQLPVYCLAPPINMIEEKSDSETLDIPEPPPNSGHECQLRLRLSTGKDLRLMVRSADTVYHMKRRLHAAEGVEPASQRWFFSGRPLTDKMRLEELKIPKDFVVQVIVSQPIPNPTPVEN</sequence>
<dbReference type="EMBL" id="BC082473">
    <property type="protein sequence ID" value="AAH82473.1"/>
    <property type="molecule type" value="mRNA"/>
</dbReference>
<dbReference type="RefSeq" id="NP_001087919.1">
    <property type="nucleotide sequence ID" value="NM_001094450.1"/>
</dbReference>
<dbReference type="SMR" id="Q640W6"/>
<dbReference type="DNASU" id="447780"/>
<dbReference type="GeneID" id="447780"/>
<dbReference type="KEGG" id="xla:447780"/>
<dbReference type="AGR" id="Xenbase:XB-GENE-947519"/>
<dbReference type="CTD" id="447780"/>
<dbReference type="Xenbase" id="XB-GENE-947519">
    <property type="gene designation" value="ubtd2.S"/>
</dbReference>
<dbReference type="OMA" id="GTGGECQ"/>
<dbReference type="OrthoDB" id="1640476at2759"/>
<dbReference type="Proteomes" id="UP000186698">
    <property type="component" value="Chromosome 3S"/>
</dbReference>
<dbReference type="Bgee" id="447780">
    <property type="expression patterns" value="Expressed in oocyte and 19 other cell types or tissues"/>
</dbReference>
<dbReference type="CDD" id="cd17121">
    <property type="entry name" value="Ubl_UBTD2"/>
    <property type="match status" value="1"/>
</dbReference>
<dbReference type="Gene3D" id="3.10.20.90">
    <property type="entry name" value="Phosphatidylinositol 3-kinase Catalytic Subunit, Chain A, domain 1"/>
    <property type="match status" value="1"/>
</dbReference>
<dbReference type="Gene3D" id="1.20.225.20">
    <property type="entry name" value="Ub domain-containing protein, DC-UbP/UBTD2, N-terminal domain"/>
    <property type="match status" value="1"/>
</dbReference>
<dbReference type="InterPro" id="IPR032752">
    <property type="entry name" value="DC-UbP/UBTD2_N"/>
</dbReference>
<dbReference type="InterPro" id="IPR038169">
    <property type="entry name" value="DC-UbP/UBTD2_N_sf"/>
</dbReference>
<dbReference type="InterPro" id="IPR000626">
    <property type="entry name" value="Ubiquitin-like_dom"/>
</dbReference>
<dbReference type="InterPro" id="IPR029071">
    <property type="entry name" value="Ubiquitin-like_domsf"/>
</dbReference>
<dbReference type="InterPro" id="IPR039869">
    <property type="entry name" value="UBTD1/2"/>
</dbReference>
<dbReference type="PANTHER" id="PTHR13609">
    <property type="entry name" value="UBIQUITIN DOMAIN CONTAINING 1 PROTEIN-RELATED"/>
    <property type="match status" value="1"/>
</dbReference>
<dbReference type="Pfam" id="PF16455">
    <property type="entry name" value="UBD"/>
    <property type="match status" value="1"/>
</dbReference>
<dbReference type="Pfam" id="PF00240">
    <property type="entry name" value="ubiquitin"/>
    <property type="match status" value="1"/>
</dbReference>
<dbReference type="SUPFAM" id="SSF54236">
    <property type="entry name" value="Ubiquitin-like"/>
    <property type="match status" value="1"/>
</dbReference>
<dbReference type="PROSITE" id="PS50053">
    <property type="entry name" value="UBIQUITIN_2"/>
    <property type="match status" value="1"/>
</dbReference>
<organism>
    <name type="scientific">Xenopus laevis</name>
    <name type="common">African clawed frog</name>
    <dbReference type="NCBI Taxonomy" id="8355"/>
    <lineage>
        <taxon>Eukaryota</taxon>
        <taxon>Metazoa</taxon>
        <taxon>Chordata</taxon>
        <taxon>Craniata</taxon>
        <taxon>Vertebrata</taxon>
        <taxon>Euteleostomi</taxon>
        <taxon>Amphibia</taxon>
        <taxon>Batrachia</taxon>
        <taxon>Anura</taxon>
        <taxon>Pipoidea</taxon>
        <taxon>Pipidae</taxon>
        <taxon>Xenopodinae</taxon>
        <taxon>Xenopus</taxon>
        <taxon>Xenopus</taxon>
    </lineage>
</organism>
<feature type="chain" id="PRO_0000242678" description="Ubiquitin domain-containing protein 1">
    <location>
        <begin position="1"/>
        <end position="234"/>
    </location>
</feature>
<feature type="domain" description="Ubiquitin-like" evidence="2">
    <location>
        <begin position="152"/>
        <end position="227"/>
    </location>
</feature>
<feature type="region of interest" description="Disordered" evidence="3">
    <location>
        <begin position="1"/>
        <end position="47"/>
    </location>
</feature>
<feature type="compositionally biased region" description="Polar residues" evidence="3">
    <location>
        <begin position="12"/>
        <end position="21"/>
    </location>
</feature>
<feature type="compositionally biased region" description="Basic and acidic residues" evidence="3">
    <location>
        <begin position="32"/>
        <end position="41"/>
    </location>
</feature>
<keyword id="KW-1185">Reference proteome</keyword>
<comment type="function">
    <text evidence="1">May be involved in the regulation of cellular senescence through a positive feedback loop with TP53.</text>
</comment>
<accession>Q640W6</accession>
<gene>
    <name type="primary">ubtd1</name>
</gene>
<proteinExistence type="evidence at transcript level"/>
<evidence type="ECO:0000250" key="1">
    <source>
        <dbReference type="UniProtKB" id="Q9HAC8"/>
    </source>
</evidence>
<evidence type="ECO:0000255" key="2">
    <source>
        <dbReference type="PROSITE-ProRule" id="PRU00214"/>
    </source>
</evidence>
<evidence type="ECO:0000256" key="3">
    <source>
        <dbReference type="SAM" id="MobiDB-lite"/>
    </source>
</evidence>
<name>UBTD1_XENLA</name>
<reference key="1">
    <citation type="submission" date="2004-09" db="EMBL/GenBank/DDBJ databases">
        <authorList>
            <consortium name="NIH - Xenopus Gene Collection (XGC) project"/>
        </authorList>
    </citation>
    <scope>NUCLEOTIDE SEQUENCE [LARGE SCALE MRNA]</scope>
    <source>
        <tissue>Brain</tissue>
    </source>
</reference>
<protein>
    <recommendedName>
        <fullName>Ubiquitin domain-containing protein 1</fullName>
    </recommendedName>
</protein>